<sequence>MAVKIKLKRLGKIRSPHYRIVVADSRTRRDGRAIEEIGLYHPVQNPSRMEVDAERVAYWLGVGAQPTEPVLAILKKTGDWQKFKGEPAPAPLLVAAPKATRPSFDALGGDDAGKGEAITQKKKAEKKDEAAAESSSSESTEA</sequence>
<organism>
    <name type="scientific">Streptomyces avermitilis (strain ATCC 31267 / DSM 46492 / JCM 5070 / NBRC 14893 / NCIMB 12804 / NRRL 8165 / MA-4680)</name>
    <dbReference type="NCBI Taxonomy" id="227882"/>
    <lineage>
        <taxon>Bacteria</taxon>
        <taxon>Bacillati</taxon>
        <taxon>Actinomycetota</taxon>
        <taxon>Actinomycetes</taxon>
        <taxon>Kitasatosporales</taxon>
        <taxon>Streptomycetaceae</taxon>
        <taxon>Streptomyces</taxon>
    </lineage>
</organism>
<accession>Q82JW0</accession>
<proteinExistence type="inferred from homology"/>
<feature type="chain" id="PRO_0000167253" description="Small ribosomal subunit protein bS16">
    <location>
        <begin position="1"/>
        <end position="142"/>
    </location>
</feature>
<feature type="region of interest" description="Disordered" evidence="2">
    <location>
        <begin position="101"/>
        <end position="142"/>
    </location>
</feature>
<feature type="compositionally biased region" description="Low complexity" evidence="2">
    <location>
        <begin position="132"/>
        <end position="142"/>
    </location>
</feature>
<evidence type="ECO:0000255" key="1">
    <source>
        <dbReference type="HAMAP-Rule" id="MF_00385"/>
    </source>
</evidence>
<evidence type="ECO:0000256" key="2">
    <source>
        <dbReference type="SAM" id="MobiDB-lite"/>
    </source>
</evidence>
<evidence type="ECO:0000305" key="3"/>
<name>RS16_STRAW</name>
<comment type="similarity">
    <text evidence="1">Belongs to the bacterial ribosomal protein bS16 family.</text>
</comment>
<keyword id="KW-1185">Reference proteome</keyword>
<keyword id="KW-0687">Ribonucleoprotein</keyword>
<keyword id="KW-0689">Ribosomal protein</keyword>
<dbReference type="EMBL" id="BA000030">
    <property type="protein sequence ID" value="BAC70355.1"/>
    <property type="molecule type" value="Genomic_DNA"/>
</dbReference>
<dbReference type="RefSeq" id="WP_010984078.1">
    <property type="nucleotide sequence ID" value="NZ_JZJK01000071.1"/>
</dbReference>
<dbReference type="SMR" id="Q82JW0"/>
<dbReference type="GeneID" id="41539726"/>
<dbReference type="KEGG" id="sma:SAVERM_2644"/>
<dbReference type="eggNOG" id="COG0228">
    <property type="taxonomic scope" value="Bacteria"/>
</dbReference>
<dbReference type="HOGENOM" id="CLU_100590_1_0_11"/>
<dbReference type="OrthoDB" id="9807878at2"/>
<dbReference type="Proteomes" id="UP000000428">
    <property type="component" value="Chromosome"/>
</dbReference>
<dbReference type="GO" id="GO:0005737">
    <property type="term" value="C:cytoplasm"/>
    <property type="evidence" value="ECO:0007669"/>
    <property type="project" value="UniProtKB-ARBA"/>
</dbReference>
<dbReference type="GO" id="GO:0015935">
    <property type="term" value="C:small ribosomal subunit"/>
    <property type="evidence" value="ECO:0007669"/>
    <property type="project" value="TreeGrafter"/>
</dbReference>
<dbReference type="GO" id="GO:0003735">
    <property type="term" value="F:structural constituent of ribosome"/>
    <property type="evidence" value="ECO:0007669"/>
    <property type="project" value="InterPro"/>
</dbReference>
<dbReference type="GO" id="GO:0006412">
    <property type="term" value="P:translation"/>
    <property type="evidence" value="ECO:0007669"/>
    <property type="project" value="UniProtKB-UniRule"/>
</dbReference>
<dbReference type="FunFam" id="3.30.1320.10:FF:000009">
    <property type="entry name" value="30S ribosomal protein S16"/>
    <property type="match status" value="1"/>
</dbReference>
<dbReference type="Gene3D" id="3.30.1320.10">
    <property type="match status" value="1"/>
</dbReference>
<dbReference type="HAMAP" id="MF_00385">
    <property type="entry name" value="Ribosomal_bS16"/>
    <property type="match status" value="1"/>
</dbReference>
<dbReference type="InterPro" id="IPR000307">
    <property type="entry name" value="Ribosomal_bS16"/>
</dbReference>
<dbReference type="InterPro" id="IPR020592">
    <property type="entry name" value="Ribosomal_bS16_CS"/>
</dbReference>
<dbReference type="InterPro" id="IPR023803">
    <property type="entry name" value="Ribosomal_bS16_dom_sf"/>
</dbReference>
<dbReference type="NCBIfam" id="NF011093">
    <property type="entry name" value="PRK14520.1"/>
    <property type="match status" value="1"/>
</dbReference>
<dbReference type="NCBIfam" id="TIGR00002">
    <property type="entry name" value="S16"/>
    <property type="match status" value="1"/>
</dbReference>
<dbReference type="PANTHER" id="PTHR12919">
    <property type="entry name" value="30S RIBOSOMAL PROTEIN S16"/>
    <property type="match status" value="1"/>
</dbReference>
<dbReference type="PANTHER" id="PTHR12919:SF20">
    <property type="entry name" value="SMALL RIBOSOMAL SUBUNIT PROTEIN BS16M"/>
    <property type="match status" value="1"/>
</dbReference>
<dbReference type="Pfam" id="PF00886">
    <property type="entry name" value="Ribosomal_S16"/>
    <property type="match status" value="1"/>
</dbReference>
<dbReference type="SUPFAM" id="SSF54565">
    <property type="entry name" value="Ribosomal protein S16"/>
    <property type="match status" value="1"/>
</dbReference>
<dbReference type="PROSITE" id="PS00732">
    <property type="entry name" value="RIBOSOMAL_S16"/>
    <property type="match status" value="1"/>
</dbReference>
<gene>
    <name evidence="1" type="primary">rpsP</name>
    <name type="ordered locus">SAV_2644</name>
</gene>
<protein>
    <recommendedName>
        <fullName evidence="1">Small ribosomal subunit protein bS16</fullName>
    </recommendedName>
    <alternativeName>
        <fullName evidence="3">30S ribosomal protein S16</fullName>
    </alternativeName>
</protein>
<reference key="1">
    <citation type="journal article" date="2001" name="Proc. Natl. Acad. Sci. U.S.A.">
        <title>Genome sequence of an industrial microorganism Streptomyces avermitilis: deducing the ability of producing secondary metabolites.</title>
        <authorList>
            <person name="Omura S."/>
            <person name="Ikeda H."/>
            <person name="Ishikawa J."/>
            <person name="Hanamoto A."/>
            <person name="Takahashi C."/>
            <person name="Shinose M."/>
            <person name="Takahashi Y."/>
            <person name="Horikawa H."/>
            <person name="Nakazawa H."/>
            <person name="Osonoe T."/>
            <person name="Kikuchi H."/>
            <person name="Shiba T."/>
            <person name="Sakaki Y."/>
            <person name="Hattori M."/>
        </authorList>
    </citation>
    <scope>NUCLEOTIDE SEQUENCE [LARGE SCALE GENOMIC DNA]</scope>
    <source>
        <strain>ATCC 31267 / DSM 46492 / JCM 5070 / NBRC 14893 / NCIMB 12804 / NRRL 8165 / MA-4680</strain>
    </source>
</reference>
<reference key="2">
    <citation type="journal article" date="2003" name="Nat. Biotechnol.">
        <title>Complete genome sequence and comparative analysis of the industrial microorganism Streptomyces avermitilis.</title>
        <authorList>
            <person name="Ikeda H."/>
            <person name="Ishikawa J."/>
            <person name="Hanamoto A."/>
            <person name="Shinose M."/>
            <person name="Kikuchi H."/>
            <person name="Shiba T."/>
            <person name="Sakaki Y."/>
            <person name="Hattori M."/>
            <person name="Omura S."/>
        </authorList>
    </citation>
    <scope>NUCLEOTIDE SEQUENCE [LARGE SCALE GENOMIC DNA]</scope>
    <source>
        <strain>ATCC 31267 / DSM 46492 / JCM 5070 / NBRC 14893 / NCIMB 12804 / NRRL 8165 / MA-4680</strain>
    </source>
</reference>